<keyword id="KW-1003">Cell membrane</keyword>
<keyword id="KW-0472">Membrane</keyword>
<keyword id="KW-0484">Methanogenesis</keyword>
<keyword id="KW-0489">Methyltransferase</keyword>
<keyword id="KW-0554">One-carbon metabolism</keyword>
<keyword id="KW-0808">Transferase</keyword>
<keyword id="KW-1278">Translocase</keyword>
<keyword id="KW-0812">Transmembrane</keyword>
<keyword id="KW-1133">Transmembrane helix</keyword>
<sequence>MEPLISMGVLALIGVAATIAGASEDLESDIGSQSNPNSQVQLAPQMMFPHRIFNKAISGEPPSNALMCSIGAAVATVLISEFTMSPLFALVFGSLIAACVHATFAVTSTMGRCASQSRFKQPIYLDMIRSHITPIMGYAFITTFCILVVSYLMTVVLGHPFPLTMLAFIWGITIGAIGSSTGDVHYGAEREFQQFEFGSGLNASNSGNIVRYAESGLRDGFDNSWFCAKFGGPVTGLAFGMTVFLGSWITTIFDPAKGLGWLSVIAGIVIVFILIIWNWKMEVYARKAYGPYKEDKTEEASA</sequence>
<proteinExistence type="inferred from homology"/>
<name>MTRE_METBF</name>
<organism>
    <name type="scientific">Methanosarcina barkeri (strain Fusaro / DSM 804)</name>
    <dbReference type="NCBI Taxonomy" id="269797"/>
    <lineage>
        <taxon>Archaea</taxon>
        <taxon>Methanobacteriati</taxon>
        <taxon>Methanobacteriota</taxon>
        <taxon>Stenosarchaea group</taxon>
        <taxon>Methanomicrobia</taxon>
        <taxon>Methanosarcinales</taxon>
        <taxon>Methanosarcinaceae</taxon>
        <taxon>Methanosarcina</taxon>
    </lineage>
</organism>
<dbReference type="EC" id="7.2.1.4" evidence="1"/>
<dbReference type="EMBL" id="AJ132817">
    <property type="protein sequence ID" value="CAB41638.1"/>
    <property type="molecule type" value="Genomic_DNA"/>
</dbReference>
<dbReference type="EMBL" id="CP000099">
    <property type="protein sequence ID" value="AAZ70225.1"/>
    <property type="molecule type" value="Genomic_DNA"/>
</dbReference>
<dbReference type="SMR" id="Q9Y8K0"/>
<dbReference type="STRING" id="269797.Mbar_A1262"/>
<dbReference type="PaxDb" id="269797-Mbar_A1262"/>
<dbReference type="GeneID" id="24825086"/>
<dbReference type="KEGG" id="mba:Mbar_A1262"/>
<dbReference type="eggNOG" id="arCOG04870">
    <property type="taxonomic scope" value="Archaea"/>
</dbReference>
<dbReference type="HOGENOM" id="CLU_958513_0_0_2"/>
<dbReference type="OrthoDB" id="82302at2157"/>
<dbReference type="UniPathway" id="UPA00640">
    <property type="reaction ID" value="UER00698"/>
</dbReference>
<dbReference type="GO" id="GO:0005737">
    <property type="term" value="C:cytoplasm"/>
    <property type="evidence" value="ECO:0007669"/>
    <property type="project" value="InterPro"/>
</dbReference>
<dbReference type="GO" id="GO:0005886">
    <property type="term" value="C:plasma membrane"/>
    <property type="evidence" value="ECO:0007669"/>
    <property type="project" value="UniProtKB-SubCell"/>
</dbReference>
<dbReference type="GO" id="GO:0012506">
    <property type="term" value="C:vesicle membrane"/>
    <property type="evidence" value="ECO:0007669"/>
    <property type="project" value="InterPro"/>
</dbReference>
<dbReference type="GO" id="GO:0030269">
    <property type="term" value="F:tetrahydromethanopterin S-methyltransferase activity"/>
    <property type="evidence" value="ECO:0007669"/>
    <property type="project" value="UniProtKB-UniRule"/>
</dbReference>
<dbReference type="GO" id="GO:0019386">
    <property type="term" value="P:methanogenesis, from carbon dioxide"/>
    <property type="evidence" value="ECO:0007669"/>
    <property type="project" value="UniProtKB-UniRule"/>
</dbReference>
<dbReference type="GO" id="GO:0032259">
    <property type="term" value="P:methylation"/>
    <property type="evidence" value="ECO:0007669"/>
    <property type="project" value="UniProtKB-KW"/>
</dbReference>
<dbReference type="GO" id="GO:0006730">
    <property type="term" value="P:one-carbon metabolic process"/>
    <property type="evidence" value="ECO:0007669"/>
    <property type="project" value="UniProtKB-UniRule"/>
</dbReference>
<dbReference type="HAMAP" id="MF_01098">
    <property type="entry name" value="MtrE"/>
    <property type="match status" value="1"/>
</dbReference>
<dbReference type="InterPro" id="IPR005780">
    <property type="entry name" value="MeTrfase_E"/>
</dbReference>
<dbReference type="NCBIfam" id="TIGR01113">
    <property type="entry name" value="mtrE"/>
    <property type="match status" value="1"/>
</dbReference>
<dbReference type="Pfam" id="PF04206">
    <property type="entry name" value="MtrE"/>
    <property type="match status" value="1"/>
</dbReference>
<dbReference type="PIRSF" id="PIRSF016509">
    <property type="entry name" value="MtrE"/>
    <property type="match status" value="1"/>
</dbReference>
<evidence type="ECO:0000255" key="1">
    <source>
        <dbReference type="HAMAP-Rule" id="MF_01098"/>
    </source>
</evidence>
<comment type="function">
    <text evidence="1">Part of a complex that catalyzes the formation of methyl-coenzyme M and tetrahydromethanopterin from coenzyme M and methyl-tetrahydromethanopterin. This is an energy-conserving, sodium-ion translocating step.</text>
</comment>
<comment type="catalytic activity">
    <reaction evidence="1">
        <text>5-methyl-5,6,7,8-tetrahydromethanopterin + coenzyme M + 2 Na(+)(in) = 5,6,7,8-tetrahydromethanopterin + methyl-coenzyme M + 2 Na(+)(out)</text>
        <dbReference type="Rhea" id="RHEA:53492"/>
        <dbReference type="ChEBI" id="CHEBI:29101"/>
        <dbReference type="ChEBI" id="CHEBI:58103"/>
        <dbReference type="ChEBI" id="CHEBI:58116"/>
        <dbReference type="ChEBI" id="CHEBI:58286"/>
        <dbReference type="ChEBI" id="CHEBI:58319"/>
        <dbReference type="EC" id="7.2.1.4"/>
    </reaction>
</comment>
<comment type="pathway">
    <text evidence="1">One-carbon metabolism; methanogenesis from CO(2); methyl-coenzyme M from 5,10-methylene-5,6,7,8-tetrahydromethanopterin: step 2/2.</text>
</comment>
<comment type="subunit">
    <text evidence="1">The complex is composed of 8 subunits; MtrA, MtrB, MtrC, MtrD, MtrE, MtrF, MtrG and MtrH.</text>
</comment>
<comment type="subcellular location">
    <subcellularLocation>
        <location evidence="1">Cell membrane</location>
        <topology evidence="1">Multi-pass membrane protein</topology>
    </subcellularLocation>
</comment>
<comment type="similarity">
    <text evidence="1">Belongs to the MtrE family.</text>
</comment>
<protein>
    <recommendedName>
        <fullName evidence="1">Tetrahydromethanopterin S-methyltransferase subunit E</fullName>
        <ecNumber evidence="1">7.2.1.4</ecNumber>
    </recommendedName>
    <alternativeName>
        <fullName evidence="1">N5-methyltetrahydromethanopterin--coenzyme M methyltransferase subunit E</fullName>
    </alternativeName>
</protein>
<accession>Q9Y8K0</accession>
<accession>Q46D17</accession>
<feature type="chain" id="PRO_0000147537" description="Tetrahydromethanopterin S-methyltransferase subunit E">
    <location>
        <begin position="1"/>
        <end position="302"/>
    </location>
</feature>
<feature type="transmembrane region" description="Helical" evidence="1">
    <location>
        <begin position="3"/>
        <end position="23"/>
    </location>
</feature>
<feature type="transmembrane region" description="Helical" evidence="1">
    <location>
        <begin position="86"/>
        <end position="106"/>
    </location>
</feature>
<feature type="transmembrane region" description="Helical" evidence="1">
    <location>
        <begin position="132"/>
        <end position="152"/>
    </location>
</feature>
<feature type="transmembrane region" description="Helical" evidence="1">
    <location>
        <begin position="155"/>
        <end position="175"/>
    </location>
</feature>
<feature type="transmembrane region" description="Helical" evidence="1">
    <location>
        <begin position="233"/>
        <end position="253"/>
    </location>
</feature>
<feature type="transmembrane region" description="Helical" evidence="1">
    <location>
        <begin position="259"/>
        <end position="279"/>
    </location>
</feature>
<gene>
    <name evidence="1" type="primary">mtrE</name>
    <name type="ordered locus">Mbar_A1262</name>
</gene>
<reference key="1">
    <citation type="journal article" date="1999" name="FEBS Lett.">
        <title>The energy conserving methyltetrahydromethanopterin:coenzyme M methyltransferase complex from methanogenic archaea: function of the subunit MtrH.</title>
        <authorList>
            <person name="Hippler B."/>
            <person name="Thauer R.K."/>
        </authorList>
    </citation>
    <scope>NUCLEOTIDE SEQUENCE [GENOMIC DNA]</scope>
</reference>
<reference key="2">
    <citation type="journal article" date="2006" name="J. Bacteriol.">
        <title>The Methanosarcina barkeri genome: comparative analysis with Methanosarcina acetivorans and Methanosarcina mazei reveals extensive rearrangement within methanosarcinal genomes.</title>
        <authorList>
            <person name="Maeder D.L."/>
            <person name="Anderson I."/>
            <person name="Brettin T.S."/>
            <person name="Bruce D.C."/>
            <person name="Gilna P."/>
            <person name="Han C.S."/>
            <person name="Lapidus A."/>
            <person name="Metcalf W.W."/>
            <person name="Saunders E."/>
            <person name="Tapia R."/>
            <person name="Sowers K.R."/>
        </authorList>
    </citation>
    <scope>NUCLEOTIDE SEQUENCE [LARGE SCALE GENOMIC DNA]</scope>
    <source>
        <strain>Fusaro / DSM 804</strain>
    </source>
</reference>